<dbReference type="EC" id="2.7.11.1" evidence="2 5"/>
<dbReference type="EMBL" id="AF001168">
    <property type="protein sequence ID" value="AAB58725.1"/>
    <property type="molecule type" value="Genomic_DNA"/>
</dbReference>
<dbReference type="EMBL" id="X91630">
    <property type="protein sequence ID" value="CAA62824.1"/>
    <property type="molecule type" value="mRNA"/>
</dbReference>
<dbReference type="EMBL" id="AL138659">
    <property type="protein sequence ID" value="CAB75467.1"/>
    <property type="molecule type" value="Genomic_DNA"/>
</dbReference>
<dbReference type="EMBL" id="CP002686">
    <property type="protein sequence ID" value="AEE79957.1"/>
    <property type="molecule type" value="Genomic_DNA"/>
</dbReference>
<dbReference type="PIR" id="S68589">
    <property type="entry name" value="S68589"/>
</dbReference>
<dbReference type="SMR" id="Q96285"/>
<dbReference type="BioGRID" id="10453">
    <property type="interactions" value="10"/>
</dbReference>
<dbReference type="FunCoup" id="Q96285">
    <property type="interactions" value="17"/>
</dbReference>
<dbReference type="IntAct" id="Q96285">
    <property type="interactions" value="10"/>
</dbReference>
<dbReference type="STRING" id="3702.Q96285"/>
<dbReference type="GlyCosmos" id="Q96285">
    <property type="glycosylation" value="5 sites, No reported glycans"/>
</dbReference>
<dbReference type="GlyGen" id="Q96285">
    <property type="glycosylation" value="5 sites"/>
</dbReference>
<dbReference type="iPTMnet" id="Q96285"/>
<dbReference type="PaxDb" id="3702-AT3G59700.1"/>
<dbReference type="ProteomicsDB" id="238523"/>
<dbReference type="EnsemblPlants" id="AT3G59700.1">
    <property type="protein sequence ID" value="AT3G59700.1"/>
    <property type="gene ID" value="AT3G59700"/>
</dbReference>
<dbReference type="Gramene" id="AT3G59700.1">
    <property type="protein sequence ID" value="AT3G59700.1"/>
    <property type="gene ID" value="AT3G59700"/>
</dbReference>
<dbReference type="KEGG" id="ath:AT3G59700"/>
<dbReference type="Araport" id="AT3G59700"/>
<dbReference type="TAIR" id="AT3G59700">
    <property type="gene designation" value="LECRK-V.5"/>
</dbReference>
<dbReference type="eggNOG" id="ENOG502QR0Z">
    <property type="taxonomic scope" value="Eukaryota"/>
</dbReference>
<dbReference type="HOGENOM" id="CLU_000288_62_3_1"/>
<dbReference type="InParanoid" id="Q96285"/>
<dbReference type="OMA" id="YNSHGYF"/>
<dbReference type="PhylomeDB" id="Q96285"/>
<dbReference type="PRO" id="PR:Q96285"/>
<dbReference type="Proteomes" id="UP000006548">
    <property type="component" value="Chromosome 3"/>
</dbReference>
<dbReference type="ExpressionAtlas" id="Q96285">
    <property type="expression patterns" value="baseline and differential"/>
</dbReference>
<dbReference type="GO" id="GO:0005886">
    <property type="term" value="C:plasma membrane"/>
    <property type="evidence" value="ECO:0000314"/>
    <property type="project" value="UniProtKB"/>
</dbReference>
<dbReference type="GO" id="GO:0005524">
    <property type="term" value="F:ATP binding"/>
    <property type="evidence" value="ECO:0007669"/>
    <property type="project" value="UniProtKB-KW"/>
</dbReference>
<dbReference type="GO" id="GO:0030246">
    <property type="term" value="F:carbohydrate binding"/>
    <property type="evidence" value="ECO:0007669"/>
    <property type="project" value="UniProtKB-KW"/>
</dbReference>
<dbReference type="GO" id="GO:0106310">
    <property type="term" value="F:protein serine kinase activity"/>
    <property type="evidence" value="ECO:0007669"/>
    <property type="project" value="RHEA"/>
</dbReference>
<dbReference type="GO" id="GO:0004674">
    <property type="term" value="F:protein serine/threonine kinase activity"/>
    <property type="evidence" value="ECO:0000314"/>
    <property type="project" value="UniProtKB"/>
</dbReference>
<dbReference type="GO" id="GO:0042742">
    <property type="term" value="P:defense response to bacterium"/>
    <property type="evidence" value="ECO:0000315"/>
    <property type="project" value="UniProtKB"/>
</dbReference>
<dbReference type="GO" id="GO:0002229">
    <property type="term" value="P:defense response to oomycetes"/>
    <property type="evidence" value="ECO:0000315"/>
    <property type="project" value="UniProtKB"/>
</dbReference>
<dbReference type="GO" id="GO:1900425">
    <property type="term" value="P:negative regulation of defense response to bacterium"/>
    <property type="evidence" value="ECO:0000315"/>
    <property type="project" value="TAIR"/>
</dbReference>
<dbReference type="GO" id="GO:0046777">
    <property type="term" value="P:protein autophosphorylation"/>
    <property type="evidence" value="ECO:0000314"/>
    <property type="project" value="UniProtKB"/>
</dbReference>
<dbReference type="GO" id="GO:0090333">
    <property type="term" value="P:regulation of stomatal closure"/>
    <property type="evidence" value="ECO:0000315"/>
    <property type="project" value="TAIR"/>
</dbReference>
<dbReference type="CDD" id="cd06899">
    <property type="entry name" value="lectin_legume_LecRK_Arcelin_ConA"/>
    <property type="match status" value="1"/>
</dbReference>
<dbReference type="CDD" id="cd14066">
    <property type="entry name" value="STKc_IRAK"/>
    <property type="match status" value="1"/>
</dbReference>
<dbReference type="FunFam" id="1.10.510.10:FF:000108">
    <property type="entry name" value="L-type lectin-domain containing receptor kinase S.4"/>
    <property type="match status" value="1"/>
</dbReference>
<dbReference type="FunFam" id="2.60.120.200:FF:000086">
    <property type="entry name" value="L-type lectin-domain containing receptor kinase S.4"/>
    <property type="match status" value="1"/>
</dbReference>
<dbReference type="FunFam" id="3.30.200.20:FF:000112">
    <property type="entry name" value="Lectin-domain containing receptor kinase A4.3"/>
    <property type="match status" value="1"/>
</dbReference>
<dbReference type="Gene3D" id="2.60.120.200">
    <property type="match status" value="1"/>
</dbReference>
<dbReference type="Gene3D" id="3.30.200.20">
    <property type="entry name" value="Phosphorylase Kinase, domain 1"/>
    <property type="match status" value="1"/>
</dbReference>
<dbReference type="Gene3D" id="1.10.510.10">
    <property type="entry name" value="Transferase(Phosphotransferase) domain 1"/>
    <property type="match status" value="1"/>
</dbReference>
<dbReference type="InterPro" id="IPR013320">
    <property type="entry name" value="ConA-like_dom_sf"/>
</dbReference>
<dbReference type="InterPro" id="IPR011009">
    <property type="entry name" value="Kinase-like_dom_sf"/>
</dbReference>
<dbReference type="InterPro" id="IPR050528">
    <property type="entry name" value="L-type_Lectin-RKs"/>
</dbReference>
<dbReference type="InterPro" id="IPR001220">
    <property type="entry name" value="Legume_lectin_dom"/>
</dbReference>
<dbReference type="InterPro" id="IPR000719">
    <property type="entry name" value="Prot_kinase_dom"/>
</dbReference>
<dbReference type="InterPro" id="IPR017441">
    <property type="entry name" value="Protein_kinase_ATP_BS"/>
</dbReference>
<dbReference type="InterPro" id="IPR008271">
    <property type="entry name" value="Ser/Thr_kinase_AS"/>
</dbReference>
<dbReference type="PANTHER" id="PTHR27007">
    <property type="match status" value="1"/>
</dbReference>
<dbReference type="Pfam" id="PF00139">
    <property type="entry name" value="Lectin_legB"/>
    <property type="match status" value="1"/>
</dbReference>
<dbReference type="Pfam" id="PF00069">
    <property type="entry name" value="Pkinase"/>
    <property type="match status" value="1"/>
</dbReference>
<dbReference type="SMART" id="SM00220">
    <property type="entry name" value="S_TKc"/>
    <property type="match status" value="1"/>
</dbReference>
<dbReference type="SUPFAM" id="SSF49899">
    <property type="entry name" value="Concanavalin A-like lectins/glucanases"/>
    <property type="match status" value="1"/>
</dbReference>
<dbReference type="SUPFAM" id="SSF56112">
    <property type="entry name" value="Protein kinase-like (PK-like)"/>
    <property type="match status" value="1"/>
</dbReference>
<dbReference type="PROSITE" id="PS00107">
    <property type="entry name" value="PROTEIN_KINASE_ATP"/>
    <property type="match status" value="1"/>
</dbReference>
<dbReference type="PROSITE" id="PS50011">
    <property type="entry name" value="PROTEIN_KINASE_DOM"/>
    <property type="match status" value="1"/>
</dbReference>
<dbReference type="PROSITE" id="PS00108">
    <property type="entry name" value="PROTEIN_KINASE_ST"/>
    <property type="match status" value="1"/>
</dbReference>
<organism>
    <name type="scientific">Arabidopsis thaliana</name>
    <name type="common">Mouse-ear cress</name>
    <dbReference type="NCBI Taxonomy" id="3702"/>
    <lineage>
        <taxon>Eukaryota</taxon>
        <taxon>Viridiplantae</taxon>
        <taxon>Streptophyta</taxon>
        <taxon>Embryophyta</taxon>
        <taxon>Tracheophyta</taxon>
        <taxon>Spermatophyta</taxon>
        <taxon>Magnoliopsida</taxon>
        <taxon>eudicotyledons</taxon>
        <taxon>Gunneridae</taxon>
        <taxon>Pentapetalae</taxon>
        <taxon>rosids</taxon>
        <taxon>malvids</taxon>
        <taxon>Brassicales</taxon>
        <taxon>Brassicaceae</taxon>
        <taxon>Camelineae</taxon>
        <taxon>Arabidopsis</taxon>
    </lineage>
</organism>
<comment type="function">
    <text evidence="4">Confers resistance to the pathogenic oomycetes Phytophthora infestans and Phytophthora capsici, but confers susceptibility to the pathogenic bacteria Pseudomonas syringae.</text>
</comment>
<comment type="catalytic activity">
    <reaction evidence="2 5">
        <text>L-seryl-[protein] + ATP = O-phospho-L-seryl-[protein] + ADP + H(+)</text>
        <dbReference type="Rhea" id="RHEA:17989"/>
        <dbReference type="Rhea" id="RHEA-COMP:9863"/>
        <dbReference type="Rhea" id="RHEA-COMP:11604"/>
        <dbReference type="ChEBI" id="CHEBI:15378"/>
        <dbReference type="ChEBI" id="CHEBI:29999"/>
        <dbReference type="ChEBI" id="CHEBI:30616"/>
        <dbReference type="ChEBI" id="CHEBI:83421"/>
        <dbReference type="ChEBI" id="CHEBI:456216"/>
        <dbReference type="EC" id="2.7.11.1"/>
    </reaction>
</comment>
<comment type="catalytic activity">
    <reaction evidence="2 5">
        <text>L-threonyl-[protein] + ATP = O-phospho-L-threonyl-[protein] + ADP + H(+)</text>
        <dbReference type="Rhea" id="RHEA:46608"/>
        <dbReference type="Rhea" id="RHEA-COMP:11060"/>
        <dbReference type="Rhea" id="RHEA-COMP:11605"/>
        <dbReference type="ChEBI" id="CHEBI:15378"/>
        <dbReference type="ChEBI" id="CHEBI:30013"/>
        <dbReference type="ChEBI" id="CHEBI:30616"/>
        <dbReference type="ChEBI" id="CHEBI:61977"/>
        <dbReference type="ChEBI" id="CHEBI:456216"/>
        <dbReference type="EC" id="2.7.11.1"/>
    </reaction>
</comment>
<comment type="subcellular location">
    <subcellularLocation>
        <location evidence="3">Cell membrane</location>
        <topology evidence="1">Single-pass type I membrane protein</topology>
    </subcellularLocation>
</comment>
<comment type="tissue specificity">
    <text evidence="5">Expressed at low levels in stems, leaves, flowers and siliques.</text>
</comment>
<comment type="PTM">
    <text evidence="5">Autophosphorylated on a Ser residue.</text>
</comment>
<comment type="disruption phenotype">
    <text evidence="4">Increased susceptibility to the oomycetes Phytophthora brassicae and Phytophthora capsici but enhanced resistance to the pathogenic bacteria Pseudomonas syringae.</text>
</comment>
<comment type="similarity">
    <text evidence="8">In the C-terminal section; belongs to the protein kinase superfamily. Ser/Thr protein kinase family.</text>
</comment>
<comment type="similarity">
    <text evidence="8">In the N-terminal section; belongs to the leguminous lectin family.</text>
</comment>
<sequence>MSRELIILCQPILVLFLTLFYNSHGYFVSQGSVGIGFNGYFTLTNTTKHTFGQAFENEHVEIKNSSTGVISSFSVNFFFAIVPEHNQQGSHGMTFVISPTRGLPGASSDQYLGIFNKTNNGKASNNVIAIELDIHKDEEFGDIDDNHVGININGLRSVASASAGYYDDKDGSFKKLSLISREVMRLSIVYSQPDQQLNVTLFPAEIPVPPLKPLLSLNRDLSPYLLEKMYLGFTASTGSVGAIHYLMGWLVNGVIEYPRLELSIPVLPPYPKKTSNRTKTVLAVCLTVSVFAAFVASWIGFVFYLRHKKVKEVLEEWEIQYGPHRFAYKELFNATKGFKEKQLLGKGGFGQVYKGTLPGSDAEIAVKRTSHDSRQGMSEFLAEISTIGRLRHPNLVRLLGYCRHKENLYLVYDYMPNGSLDKYLNRSENQERLTWEQRFRIIKDVATALLHLHQEWVQVIIHRDIKPANVLIDNEMNARLGDFGLAKLYDQGFDPETSKVAGTFGYIAPEFLRTGRATTSTDVYAFGLVMLEVVCGRRIIERRAAENEEYLVDWILELWENGKIFDAAEESIRQEQNRGQVELVLKLGVLCSHQAASIRPAMSVVMRILNGVSQLPDNLLDVVRAEKFREWPETSMELLLLDVNTSSSLELTDSSFVSHGR</sequence>
<reference key="1">
    <citation type="journal article" date="1996" name="J. Mol. Biol.">
        <title>Characterization of an Arabidopsis thaliana gene that defines a new class of putative plant receptor kinases with an extracellular lectin-like domain.</title>
        <authorList>
            <person name="Herve C."/>
            <person name="Dabos P."/>
            <person name="Galaud J.P."/>
            <person name="Rouge P."/>
            <person name="Lescure B."/>
        </authorList>
    </citation>
    <scope>NUCLEOTIDE SEQUENCE [GENOMIC DNA / MRNA]</scope>
    <scope>AUTOPHOSPHORYLATION</scope>
    <scope>TISSUE SPECIFICITY</scope>
    <scope>CATALYTIC ACTIVITY</scope>
    <source>
        <strain>cv. Columbia</strain>
    </source>
</reference>
<reference key="2">
    <citation type="journal article" date="2000" name="Nature">
        <title>Sequence and analysis of chromosome 3 of the plant Arabidopsis thaliana.</title>
        <authorList>
            <person name="Salanoubat M."/>
            <person name="Lemcke K."/>
            <person name="Rieger M."/>
            <person name="Ansorge W."/>
            <person name="Unseld M."/>
            <person name="Fartmann B."/>
            <person name="Valle G."/>
            <person name="Bloecker H."/>
            <person name="Perez-Alonso M."/>
            <person name="Obermaier B."/>
            <person name="Delseny M."/>
            <person name="Boutry M."/>
            <person name="Grivell L.A."/>
            <person name="Mache R."/>
            <person name="Puigdomenech P."/>
            <person name="De Simone V."/>
            <person name="Choisne N."/>
            <person name="Artiguenave F."/>
            <person name="Robert C."/>
            <person name="Brottier P."/>
            <person name="Wincker P."/>
            <person name="Cattolico L."/>
            <person name="Weissenbach J."/>
            <person name="Saurin W."/>
            <person name="Quetier F."/>
            <person name="Schaefer M."/>
            <person name="Mueller-Auer S."/>
            <person name="Gabel C."/>
            <person name="Fuchs M."/>
            <person name="Benes V."/>
            <person name="Wurmbach E."/>
            <person name="Drzonek H."/>
            <person name="Erfle H."/>
            <person name="Jordan N."/>
            <person name="Bangert S."/>
            <person name="Wiedelmann R."/>
            <person name="Kranz H."/>
            <person name="Voss H."/>
            <person name="Holland R."/>
            <person name="Brandt P."/>
            <person name="Nyakatura G."/>
            <person name="Vezzi A."/>
            <person name="D'Angelo M."/>
            <person name="Pallavicini A."/>
            <person name="Toppo S."/>
            <person name="Simionati B."/>
            <person name="Conrad A."/>
            <person name="Hornischer K."/>
            <person name="Kauer G."/>
            <person name="Loehnert T.-H."/>
            <person name="Nordsiek G."/>
            <person name="Reichelt J."/>
            <person name="Scharfe M."/>
            <person name="Schoen O."/>
            <person name="Bargues M."/>
            <person name="Terol J."/>
            <person name="Climent J."/>
            <person name="Navarro P."/>
            <person name="Collado C."/>
            <person name="Perez-Perez A."/>
            <person name="Ottenwaelder B."/>
            <person name="Duchemin D."/>
            <person name="Cooke R."/>
            <person name="Laudie M."/>
            <person name="Berger-Llauro C."/>
            <person name="Purnelle B."/>
            <person name="Masuy D."/>
            <person name="de Haan M."/>
            <person name="Maarse A.C."/>
            <person name="Alcaraz J.-P."/>
            <person name="Cottet A."/>
            <person name="Casacuberta E."/>
            <person name="Monfort A."/>
            <person name="Argiriou A."/>
            <person name="Flores M."/>
            <person name="Liguori R."/>
            <person name="Vitale D."/>
            <person name="Mannhaupt G."/>
            <person name="Haase D."/>
            <person name="Schoof H."/>
            <person name="Rudd S."/>
            <person name="Zaccaria P."/>
            <person name="Mewes H.-W."/>
            <person name="Mayer K.F.X."/>
            <person name="Kaul S."/>
            <person name="Town C.D."/>
            <person name="Koo H.L."/>
            <person name="Tallon L.J."/>
            <person name="Jenkins J."/>
            <person name="Rooney T."/>
            <person name="Rizzo M."/>
            <person name="Walts A."/>
            <person name="Utterback T."/>
            <person name="Fujii C.Y."/>
            <person name="Shea T.P."/>
            <person name="Creasy T.H."/>
            <person name="Haas B."/>
            <person name="Maiti R."/>
            <person name="Wu D."/>
            <person name="Peterson J."/>
            <person name="Van Aken S."/>
            <person name="Pai G."/>
            <person name="Militscher J."/>
            <person name="Sellers P."/>
            <person name="Gill J.E."/>
            <person name="Feldblyum T.V."/>
            <person name="Preuss D."/>
            <person name="Lin X."/>
            <person name="Nierman W.C."/>
            <person name="Salzberg S.L."/>
            <person name="White O."/>
            <person name="Venter J.C."/>
            <person name="Fraser C.M."/>
            <person name="Kaneko T."/>
            <person name="Nakamura Y."/>
            <person name="Sato S."/>
            <person name="Kato T."/>
            <person name="Asamizu E."/>
            <person name="Sasamoto S."/>
            <person name="Kimura T."/>
            <person name="Idesawa K."/>
            <person name="Kawashima K."/>
            <person name="Kishida Y."/>
            <person name="Kiyokawa C."/>
            <person name="Kohara M."/>
            <person name="Matsumoto M."/>
            <person name="Matsuno A."/>
            <person name="Muraki A."/>
            <person name="Nakayama S."/>
            <person name="Nakazaki N."/>
            <person name="Shinpo S."/>
            <person name="Takeuchi C."/>
            <person name="Wada T."/>
            <person name="Watanabe A."/>
            <person name="Yamada M."/>
            <person name="Yasuda M."/>
            <person name="Tabata S."/>
        </authorList>
    </citation>
    <scope>NUCLEOTIDE SEQUENCE [LARGE SCALE GENOMIC DNA]</scope>
    <source>
        <strain>cv. Columbia</strain>
    </source>
</reference>
<reference key="3">
    <citation type="journal article" date="2017" name="Plant J.">
        <title>Araport11: a complete reannotation of the Arabidopsis thaliana reference genome.</title>
        <authorList>
            <person name="Cheng C.Y."/>
            <person name="Krishnakumar V."/>
            <person name="Chan A.P."/>
            <person name="Thibaud-Nissen F."/>
            <person name="Schobel S."/>
            <person name="Town C.D."/>
        </authorList>
    </citation>
    <scope>GENOME REANNOTATION</scope>
    <source>
        <strain>cv. Columbia</strain>
    </source>
</reference>
<reference key="4">
    <citation type="journal article" date="1999" name="Plant Mol. Biol.">
        <title>Characterization of the Arabidopsis lecRK-a genes: members of a superfamily encoding putative receptors with an extracellular domain homologous to legume lectins.</title>
        <authorList>
            <person name="Herve C."/>
            <person name="Serres J."/>
            <person name="Dabos P."/>
            <person name="Canut H."/>
            <person name="Barre A."/>
            <person name="Rouge P."/>
            <person name="Lescure B."/>
        </authorList>
    </citation>
    <scope>SUBCELLULAR LOCATION</scope>
    <scope>GENE FAMILY</scope>
</reference>
<reference key="5">
    <citation type="journal article" date="2002" name="Crit. Rev. Plant Sci.">
        <title>Lectin receptor kinases in plants.</title>
        <authorList>
            <person name="Barre A."/>
            <person name="Herve C."/>
            <person name="Lescure B."/>
            <person name="Rouge P."/>
        </authorList>
    </citation>
    <scope>GENE FAMILY</scope>
</reference>
<reference key="6">
    <citation type="journal article" date="2009" name="J. Exp. Bot.">
        <title>Arabidopsis L-type lectin receptor kinases: phylogeny, classification, and expression profiles.</title>
        <authorList>
            <person name="Bouwmeester K."/>
            <person name="Govers F."/>
        </authorList>
    </citation>
    <scope>GENE FAMILY</scope>
    <scope>NOMENCLATURE</scope>
</reference>
<reference key="7">
    <citation type="journal article" date="2014" name="Mol. Plant Microbe Interact.">
        <title>Phenotypic analyses of Arabidopsis T-DNA insertion lines and expression profiling reveal that multiple L-type lectin receptor kinases are involved in plant immunity.</title>
        <authorList>
            <person name="Wang Y."/>
            <person name="Bouwmeester K."/>
            <person name="Beseh P."/>
            <person name="Shan W."/>
            <person name="Govers F."/>
        </authorList>
    </citation>
    <scope>FUNCTION</scope>
    <scope>DISRUPTION PHENOTYPE</scope>
    <source>
        <strain>cv. Columbia</strain>
    </source>
</reference>
<evidence type="ECO:0000255" key="1"/>
<evidence type="ECO:0000255" key="2">
    <source>
        <dbReference type="PROSITE-ProRule" id="PRU00159"/>
    </source>
</evidence>
<evidence type="ECO:0000269" key="3">
    <source>
    </source>
</evidence>
<evidence type="ECO:0000269" key="4">
    <source>
    </source>
</evidence>
<evidence type="ECO:0000269" key="5">
    <source>
    </source>
</evidence>
<evidence type="ECO:0000303" key="6">
    <source>
    </source>
</evidence>
<evidence type="ECO:0000303" key="7">
    <source ref="5"/>
</evidence>
<evidence type="ECO:0000305" key="8"/>
<evidence type="ECO:0000312" key="9">
    <source>
        <dbReference type="Araport" id="AT3G59700"/>
    </source>
</evidence>
<evidence type="ECO:0000312" key="10">
    <source>
        <dbReference type="EMBL" id="CAB75467.1"/>
    </source>
</evidence>
<protein>
    <recommendedName>
        <fullName evidence="6">L-type lectin-domain containing receptor kinase V.5</fullName>
        <shortName evidence="6">Arabidopsis thaliana lectin-receptor kinase a1</shortName>
        <shortName evidence="6">Ath.lecRK1</shortName>
        <shortName evidence="7">AthlecRK-a1</shortName>
        <shortName evidence="6">LecRK-V.5</shortName>
        <ecNumber evidence="2 5">2.7.11.1</ecNumber>
    </recommendedName>
</protein>
<keyword id="KW-0067">ATP-binding</keyword>
<keyword id="KW-1003">Cell membrane</keyword>
<keyword id="KW-0325">Glycoprotein</keyword>
<keyword id="KW-0418">Kinase</keyword>
<keyword id="KW-0430">Lectin</keyword>
<keyword id="KW-0472">Membrane</keyword>
<keyword id="KW-0547">Nucleotide-binding</keyword>
<keyword id="KW-0597">Phosphoprotein</keyword>
<keyword id="KW-0611">Plant defense</keyword>
<keyword id="KW-0675">Receptor</keyword>
<keyword id="KW-1185">Reference proteome</keyword>
<keyword id="KW-0723">Serine/threonine-protein kinase</keyword>
<keyword id="KW-0732">Signal</keyword>
<keyword id="KW-0808">Transferase</keyword>
<keyword id="KW-0812">Transmembrane</keyword>
<keyword id="KW-1133">Transmembrane helix</keyword>
<feature type="signal peptide" evidence="1">
    <location>
        <begin position="1"/>
        <end position="25"/>
    </location>
</feature>
<feature type="chain" id="PRO_0000403093" description="L-type lectin-domain containing receptor kinase V.5">
    <location>
        <begin position="26"/>
        <end position="661"/>
    </location>
</feature>
<feature type="topological domain" description="Extracellular" evidence="1">
    <location>
        <begin position="26"/>
        <end position="282"/>
    </location>
</feature>
<feature type="transmembrane region" description="Helical" evidence="1">
    <location>
        <begin position="283"/>
        <end position="303"/>
    </location>
</feature>
<feature type="topological domain" description="Cytoplasmic" evidence="1">
    <location>
        <begin position="304"/>
        <end position="661"/>
    </location>
</feature>
<feature type="domain" description="Protein kinase" evidence="2">
    <location>
        <begin position="338"/>
        <end position="596"/>
    </location>
</feature>
<feature type="region of interest" description="Legume-lectin like" evidence="1">
    <location>
        <begin position="30"/>
        <end position="250"/>
    </location>
</feature>
<feature type="active site" description="Proton acceptor" evidence="2">
    <location>
        <position position="464"/>
    </location>
</feature>
<feature type="binding site" evidence="2">
    <location>
        <begin position="344"/>
        <end position="352"/>
    </location>
    <ligand>
        <name>ATP</name>
        <dbReference type="ChEBI" id="CHEBI:30616"/>
    </ligand>
</feature>
<feature type="binding site" evidence="2">
    <location>
        <position position="367"/>
    </location>
    <ligand>
        <name>ATP</name>
        <dbReference type="ChEBI" id="CHEBI:30616"/>
    </ligand>
</feature>
<feature type="glycosylation site" description="N-linked (GlcNAc...) asparagine" evidence="1">
    <location>
        <position position="45"/>
    </location>
</feature>
<feature type="glycosylation site" description="N-linked (GlcNAc...) asparagine" evidence="1">
    <location>
        <position position="64"/>
    </location>
</feature>
<feature type="glycosylation site" description="N-linked (GlcNAc...) asparagine" evidence="1">
    <location>
        <position position="116"/>
    </location>
</feature>
<feature type="glycosylation site" description="N-linked (GlcNAc...) asparagine" evidence="1">
    <location>
        <position position="198"/>
    </location>
</feature>
<feature type="glycosylation site" description="N-linked (GlcNAc...) asparagine" evidence="1">
    <location>
        <position position="276"/>
    </location>
</feature>
<accession>Q96285</accession>
<accession>O04752</accession>
<accession>O04836</accession>
<proteinExistence type="evidence at protein level"/>
<name>LRK55_ARATH</name>
<gene>
    <name evidence="6" type="primary">LECRK55</name>
    <name evidence="7" type="synonym">LECRKA1</name>
    <name evidence="9" type="ordered locus">At3g59700</name>
    <name evidence="10" type="ORF">T16L24.250</name>
</gene>